<accession>Q8ZLY9</accession>
<organism>
    <name type="scientific">Salmonella typhimurium (strain LT2 / SGSC1412 / ATCC 700720)</name>
    <dbReference type="NCBI Taxonomy" id="99287"/>
    <lineage>
        <taxon>Bacteria</taxon>
        <taxon>Pseudomonadati</taxon>
        <taxon>Pseudomonadota</taxon>
        <taxon>Gammaproteobacteria</taxon>
        <taxon>Enterobacterales</taxon>
        <taxon>Enterobacteriaceae</taxon>
        <taxon>Salmonella</taxon>
    </lineage>
</organism>
<proteinExistence type="evidence at protein level"/>
<protein>
    <recommendedName>
        <fullName evidence="1 8">Ubiquinone biosynthesis accessory factor UbiK</fullName>
    </recommendedName>
</protein>
<name>UBIK_SALTY</name>
<reference key="1">
    <citation type="journal article" date="2001" name="Nature">
        <title>Complete genome sequence of Salmonella enterica serovar Typhimurium LT2.</title>
        <authorList>
            <person name="McClelland M."/>
            <person name="Sanderson K.E."/>
            <person name="Spieth J."/>
            <person name="Clifton S.W."/>
            <person name="Latreille P."/>
            <person name="Courtney L."/>
            <person name="Porwollik S."/>
            <person name="Ali J."/>
            <person name="Dante M."/>
            <person name="Du F."/>
            <person name="Hou S."/>
            <person name="Layman D."/>
            <person name="Leonard S."/>
            <person name="Nguyen C."/>
            <person name="Scott K."/>
            <person name="Holmes A."/>
            <person name="Grewal N."/>
            <person name="Mulvaney E."/>
            <person name="Ryan E."/>
            <person name="Sun H."/>
            <person name="Florea L."/>
            <person name="Miller W."/>
            <person name="Stoneking T."/>
            <person name="Nhan M."/>
            <person name="Waterston R."/>
            <person name="Wilson R.K."/>
        </authorList>
    </citation>
    <scope>NUCLEOTIDE SEQUENCE [LARGE SCALE GENOMIC DNA]</scope>
    <source>
        <strain>LT2 / SGSC1412 / ATCC 700720</strain>
    </source>
</reference>
<reference key="2">
    <citation type="journal article" date="2011" name="BMC Microbiol.">
        <title>YqiC of Salmonella enterica serovar Typhimurium is a membrane fusogenic protein required for mice colonization.</title>
        <authorList>
            <person name="Carrica M.C."/>
            <person name="Craig P.O."/>
            <person name="Garcia-Angulo V.A."/>
            <person name="Aguirre A."/>
            <person name="Garcia-Vescovi E."/>
            <person name="Goldbaum F.A."/>
            <person name="Cravero S.L."/>
        </authorList>
    </citation>
    <scope>FUNCTION</scope>
    <scope>SUBUNIT</scope>
    <scope>SUBCELLULAR LOCATION</scope>
    <scope>DISRUPTION PHENOTYPE</scope>
    <source>
        <strain>ATCC 14028 / SGSC 2980 / CDC 6516-60 / NCTC 12023</strain>
    </source>
</reference>
<reference key="3">
    <citation type="journal article" date="2016" name="Front. Microbiol.">
        <title>Role of yqiC in the pathogenicity of Salmonella and innate immune responses of human intestinal epithelium.</title>
        <authorList>
            <person name="Wang K.C."/>
            <person name="Huang C.H."/>
            <person name="Ding S.M."/>
            <person name="Chen C.K."/>
            <person name="Fang H.W."/>
            <person name="Huang M.T."/>
            <person name="Fang S.B."/>
        </authorList>
    </citation>
    <scope>FUNCTION</scope>
    <scope>DISRUPTION PHENOTYPE</scope>
    <source>
        <strain>SL1344</strain>
    </source>
</reference>
<reference key="4">
    <citation type="journal article" date="2017" name="J. Biol. Chem.">
        <title>The UbiK protein is an accessory factor necessary for bacterial ubiquinone (UQ) biosynthesis and forms a complex with the UQ biogenesis factor UbiJ.</title>
        <authorList>
            <person name="Loiseau L."/>
            <person name="Fyfe C."/>
            <person name="Aussel L."/>
            <person name="Hajj Chehade M."/>
            <person name="Hernandez S.B."/>
            <person name="Faivre B."/>
            <person name="Hamdane D."/>
            <person name="Mellot-Draznieks C."/>
            <person name="Rascalou B."/>
            <person name="Pelosi L."/>
            <person name="Velours C."/>
            <person name="Cornu D."/>
            <person name="Lombard M."/>
            <person name="Casadesus J."/>
            <person name="Pierrel F."/>
            <person name="Fontecave M."/>
            <person name="Barras F."/>
        </authorList>
    </citation>
    <scope>FUNCTION</scope>
    <scope>PATHWAY</scope>
    <scope>DISRUPTION PHENOTYPE</scope>
</reference>
<feature type="chain" id="PRO_0000445597" description="Ubiquinone biosynthesis accessory factor UbiK">
    <location>
        <begin position="1"/>
        <end position="119"/>
    </location>
</feature>
<feature type="region of interest" description="Disordered" evidence="2">
    <location>
        <begin position="96"/>
        <end position="119"/>
    </location>
</feature>
<feature type="coiled-coil region" evidence="1">
    <location>
        <begin position="79"/>
        <end position="99"/>
    </location>
</feature>
<feature type="compositionally biased region" description="Basic and acidic residues" evidence="2">
    <location>
        <begin position="96"/>
        <end position="106"/>
    </location>
</feature>
<feature type="compositionally biased region" description="Pro residues" evidence="2">
    <location>
        <begin position="109"/>
        <end position="119"/>
    </location>
</feature>
<keyword id="KW-0175">Coiled coil</keyword>
<keyword id="KW-0963">Cytoplasm</keyword>
<keyword id="KW-1185">Reference proteome</keyword>
<keyword id="KW-0831">Ubiquinone biosynthesis</keyword>
<comment type="function">
    <text evidence="3 4 5">Required for efficient ubiquinone (coenzyme Q) biosynthesis under aerobic conditions. UbiK is probably an accessory factor of Ubi enzymes and facilitates ubiquinone biosynthesis by acting as an assembly factor, a targeting factor, or both. Dispensable for ubiquinone biosynthesis under anaerobiosis (PubMed:28559279). Required for proliferation in macrophages and virulence in mice (PubMed:21554724, PubMed:28559279). Significantly contributes to colonization and invasion as well as host inflammation and innate immunity after infection (PubMed:27777572). In vitro, has membrane fusogenic activity at acidic pH (PubMed:21554724).</text>
</comment>
<comment type="pathway">
    <text evidence="1 9">Cofactor biosynthesis; ubiquinone biosynthesis.</text>
</comment>
<comment type="subunit">
    <text evidence="3">Homotrimer.</text>
</comment>
<comment type="subcellular location">
    <subcellularLocation>
        <location evidence="1 3">Cytoplasm</location>
    </subcellularLocation>
    <text evidence="3">Is both soluble and membrane associated inside the cell.</text>
</comment>
<comment type="disruption phenotype">
    <text evidence="3 4 5">Mutant is growth-deficient under aerobic conditions and is impaired to replicate at physiological and high temperatures (PubMed:21554724, PubMed:28559279). Mutant is defective for proliferation in macrophages and mice infection and has a severe attenuation in virulence in the murine model when inoculated both orally and intraperitoneally (PubMed:21554724, PubMed:28559279). Deletion inhibits colonization and invasion of four human cell lines, impairs flagella formation, activates the expression of type-1 fimbriae-like structures on the cell surface, enhances biofilm formation and reduces bacterial motility. The deletion mutant is menaquinone-deficient (PubMed:27777572).</text>
</comment>
<comment type="similarity">
    <text evidence="1 8">Belongs to the UbiK family.</text>
</comment>
<sequence length="119" mass="13947">MASTYRTTIRANTYQFRETTMIDPKKIEQIARQVHESMPKGIREFGEDIEKKIRQTLQSQLTRLDLVSREEFDVQTQVLLRTREKLALLEQRLSELEARDKPEEVKPAPAIPPVDPQQE</sequence>
<evidence type="ECO:0000255" key="1">
    <source>
        <dbReference type="HAMAP-Rule" id="MF_02216"/>
    </source>
</evidence>
<evidence type="ECO:0000256" key="2">
    <source>
        <dbReference type="SAM" id="MobiDB-lite"/>
    </source>
</evidence>
<evidence type="ECO:0000269" key="3">
    <source>
    </source>
</evidence>
<evidence type="ECO:0000269" key="4">
    <source>
    </source>
</evidence>
<evidence type="ECO:0000269" key="5">
    <source>
    </source>
</evidence>
<evidence type="ECO:0000303" key="6">
    <source>
    </source>
</evidence>
<evidence type="ECO:0000303" key="7">
    <source>
    </source>
</evidence>
<evidence type="ECO:0000305" key="8"/>
<evidence type="ECO:0000305" key="9">
    <source>
    </source>
</evidence>
<evidence type="ECO:0000312" key="10">
    <source>
        <dbReference type="EMBL" id="AAL22070.1"/>
    </source>
</evidence>
<gene>
    <name evidence="1 7" type="primary">ubiK</name>
    <name evidence="6" type="synonym">yqiC</name>
    <name evidence="10" type="ordered locus">STM3196</name>
</gene>
<dbReference type="EMBL" id="AE006468">
    <property type="protein sequence ID" value="AAL22070.1"/>
    <property type="molecule type" value="Genomic_DNA"/>
</dbReference>
<dbReference type="RefSeq" id="NP_462111.3">
    <property type="nucleotide sequence ID" value="NC_003197.2"/>
</dbReference>
<dbReference type="RefSeq" id="WP_014343900.1">
    <property type="nucleotide sequence ID" value="NC_003197.2"/>
</dbReference>
<dbReference type="SMR" id="Q8ZLY9"/>
<dbReference type="STRING" id="99287.STM3196"/>
<dbReference type="PaxDb" id="99287-STM3196"/>
<dbReference type="GeneID" id="1254719"/>
<dbReference type="KEGG" id="stm:STM3196"/>
<dbReference type="HOGENOM" id="CLU_154412_0_2_6"/>
<dbReference type="PhylomeDB" id="Q8ZLY9"/>
<dbReference type="BioCyc" id="SENT99287:STM3196-MONOMER"/>
<dbReference type="UniPathway" id="UPA00232"/>
<dbReference type="Proteomes" id="UP000001014">
    <property type="component" value="Chromosome"/>
</dbReference>
<dbReference type="GO" id="GO:0005829">
    <property type="term" value="C:cytosol"/>
    <property type="evidence" value="ECO:0000318"/>
    <property type="project" value="GO_Central"/>
</dbReference>
<dbReference type="GO" id="GO:0006744">
    <property type="term" value="P:ubiquinone biosynthetic process"/>
    <property type="evidence" value="ECO:0007669"/>
    <property type="project" value="UniProtKB-UniRule"/>
</dbReference>
<dbReference type="HAMAP" id="MF_02216">
    <property type="entry name" value="UbiK"/>
    <property type="match status" value="1"/>
</dbReference>
<dbReference type="InterPro" id="IPR007475">
    <property type="entry name" value="UbiK"/>
</dbReference>
<dbReference type="NCBIfam" id="NF047835">
    <property type="entry name" value="UbiqAccUbiK"/>
    <property type="match status" value="1"/>
</dbReference>
<dbReference type="PANTHER" id="PTHR38040">
    <property type="entry name" value="UBIQUINONE BIOSYNTHESIS ACCESSORY FACTOR UBIK"/>
    <property type="match status" value="1"/>
</dbReference>
<dbReference type="PANTHER" id="PTHR38040:SF1">
    <property type="entry name" value="UBIQUINONE BIOSYNTHESIS ACCESSORY FACTOR UBIK"/>
    <property type="match status" value="1"/>
</dbReference>
<dbReference type="Pfam" id="PF04380">
    <property type="entry name" value="BMFP"/>
    <property type="match status" value="1"/>
</dbReference>